<organism>
    <name type="scientific">Mycobacterium sp. (strain MCS)</name>
    <dbReference type="NCBI Taxonomy" id="164756"/>
    <lineage>
        <taxon>Bacteria</taxon>
        <taxon>Bacillati</taxon>
        <taxon>Actinomycetota</taxon>
        <taxon>Actinomycetes</taxon>
        <taxon>Mycobacteriales</taxon>
        <taxon>Mycobacteriaceae</taxon>
        <taxon>Mycobacterium</taxon>
    </lineage>
</organism>
<name>PCKG_MYCSS</name>
<sequence length="609" mass="67822">MTSATIPGLDTAPTEHEGLLAWVREVAELTQPDRVVFTDGSEEECARLTEQLCEAGTFQKLNEEKKPNSYLALSDPSDVARVESRTYICSEREIDAGPTNNWMDPAEMRGIMTDLYRGSMRGRTMYVVPFCMGPLEAEDPKLGVEITDSEYVVVSMRTMTRMGQAALDKMGTDGFFVKALHSLGAPLEPGEKDVPWPCNDTKYITHFPETREIWSYGSGYGGNALLGKKCYSLRIASAMAHDEGWLAEHMLILKLISPENKAYFIAAAFPSACGKTNLAMLQPTIPGWRAETVGDDIAWMRFGKDGRLYAVNPEFGFFGVAPGTNWSSNPNAMKTIEAGNTVFTNVAKTDDGDVWWEGLEGEPDHLIDWKGNDYILRETETKAAHPNSRYCTPISQCPTLAPEWDDPQGVPISAILFGGRRKTTVPLITQARDWQHGVFIGATLGSEQTAAAEGKVGTVRRDPMAMLPFLGYNVGDYFQHWIDIGKNADESKMPAVFFVNWFRRGDDGRFLWPGFGENSRVLKWAIERIEHKADGRSTPIGIVPTAQDLDLEGLDVDPEDVDAALAVKPEEWRQELPLIEEWFEFVGEKLPTGIRDEFDALKHRLAEEA</sequence>
<keyword id="KW-0963">Cytoplasm</keyword>
<keyword id="KW-0210">Decarboxylase</keyword>
<keyword id="KW-0312">Gluconeogenesis</keyword>
<keyword id="KW-0342">GTP-binding</keyword>
<keyword id="KW-0456">Lyase</keyword>
<keyword id="KW-0464">Manganese</keyword>
<keyword id="KW-0479">Metal-binding</keyword>
<keyword id="KW-0547">Nucleotide-binding</keyword>
<proteinExistence type="inferred from homology"/>
<accession>Q1BFN7</accession>
<gene>
    <name evidence="1" type="primary">pckG</name>
    <name type="ordered locus">Mmcs_0176</name>
</gene>
<feature type="chain" id="PRO_1000060295" description="Phosphoenolpyruvate carboxykinase [GTP]">
    <location>
        <begin position="1"/>
        <end position="609"/>
    </location>
</feature>
<feature type="active site" evidence="1">
    <location>
        <position position="273"/>
    </location>
</feature>
<feature type="binding site" evidence="1">
    <location>
        <position position="81"/>
    </location>
    <ligand>
        <name>substrate</name>
    </ligand>
</feature>
<feature type="binding site" evidence="1">
    <location>
        <begin position="220"/>
        <end position="222"/>
    </location>
    <ligand>
        <name>substrate</name>
    </ligand>
</feature>
<feature type="binding site" evidence="1">
    <location>
        <position position="229"/>
    </location>
    <ligand>
        <name>Mn(2+)</name>
        <dbReference type="ChEBI" id="CHEBI:29035"/>
    </ligand>
</feature>
<feature type="binding site" evidence="1">
    <location>
        <position position="249"/>
    </location>
    <ligand>
        <name>Mn(2+)</name>
        <dbReference type="ChEBI" id="CHEBI:29035"/>
    </ligand>
</feature>
<feature type="binding site" evidence="1">
    <location>
        <position position="271"/>
    </location>
    <ligand>
        <name>substrate</name>
    </ligand>
</feature>
<feature type="binding site" evidence="1">
    <location>
        <begin position="272"/>
        <end position="277"/>
    </location>
    <ligand>
        <name>GTP</name>
        <dbReference type="ChEBI" id="CHEBI:37565"/>
    </ligand>
</feature>
<feature type="binding site" evidence="1">
    <location>
        <position position="296"/>
    </location>
    <ligand>
        <name>Mn(2+)</name>
        <dbReference type="ChEBI" id="CHEBI:29035"/>
    </ligand>
</feature>
<feature type="binding site" evidence="1">
    <location>
        <begin position="387"/>
        <end position="389"/>
    </location>
    <ligand>
        <name>substrate</name>
    </ligand>
</feature>
<feature type="binding site" evidence="1">
    <location>
        <position position="389"/>
    </location>
    <ligand>
        <name>GTP</name>
        <dbReference type="ChEBI" id="CHEBI:37565"/>
    </ligand>
</feature>
<feature type="binding site" evidence="1">
    <location>
        <position position="420"/>
    </location>
    <ligand>
        <name>GTP</name>
        <dbReference type="ChEBI" id="CHEBI:37565"/>
    </ligand>
</feature>
<feature type="binding site" evidence="1">
    <location>
        <begin position="515"/>
        <end position="518"/>
    </location>
    <ligand>
        <name>GTP</name>
        <dbReference type="ChEBI" id="CHEBI:37565"/>
    </ligand>
</feature>
<dbReference type="EC" id="4.1.1.32" evidence="1"/>
<dbReference type="EMBL" id="CP000384">
    <property type="protein sequence ID" value="ABG06297.1"/>
    <property type="molecule type" value="Genomic_DNA"/>
</dbReference>
<dbReference type="SMR" id="Q1BFN7"/>
<dbReference type="KEGG" id="mmc:Mmcs_0176"/>
<dbReference type="HOGENOM" id="CLU_028872_1_1_11"/>
<dbReference type="BioCyc" id="MSP164756:G1G6O-183-MONOMER"/>
<dbReference type="UniPathway" id="UPA00138"/>
<dbReference type="GO" id="GO:0005829">
    <property type="term" value="C:cytosol"/>
    <property type="evidence" value="ECO:0007669"/>
    <property type="project" value="TreeGrafter"/>
</dbReference>
<dbReference type="GO" id="GO:0005525">
    <property type="term" value="F:GTP binding"/>
    <property type="evidence" value="ECO:0007669"/>
    <property type="project" value="UniProtKB-UniRule"/>
</dbReference>
<dbReference type="GO" id="GO:0030145">
    <property type="term" value="F:manganese ion binding"/>
    <property type="evidence" value="ECO:0007669"/>
    <property type="project" value="UniProtKB-UniRule"/>
</dbReference>
<dbReference type="GO" id="GO:0004613">
    <property type="term" value="F:phosphoenolpyruvate carboxykinase (GTP) activity"/>
    <property type="evidence" value="ECO:0007669"/>
    <property type="project" value="UniProtKB-UniRule"/>
</dbReference>
<dbReference type="GO" id="GO:0071333">
    <property type="term" value="P:cellular response to glucose stimulus"/>
    <property type="evidence" value="ECO:0007669"/>
    <property type="project" value="TreeGrafter"/>
</dbReference>
<dbReference type="GO" id="GO:0006094">
    <property type="term" value="P:gluconeogenesis"/>
    <property type="evidence" value="ECO:0007669"/>
    <property type="project" value="UniProtKB-UniRule"/>
</dbReference>
<dbReference type="GO" id="GO:0046327">
    <property type="term" value="P:glycerol biosynthetic process from pyruvate"/>
    <property type="evidence" value="ECO:0007669"/>
    <property type="project" value="TreeGrafter"/>
</dbReference>
<dbReference type="GO" id="GO:0006107">
    <property type="term" value="P:oxaloacetate metabolic process"/>
    <property type="evidence" value="ECO:0007669"/>
    <property type="project" value="TreeGrafter"/>
</dbReference>
<dbReference type="GO" id="GO:0019543">
    <property type="term" value="P:propionate catabolic process"/>
    <property type="evidence" value="ECO:0007669"/>
    <property type="project" value="TreeGrafter"/>
</dbReference>
<dbReference type="GO" id="GO:0033993">
    <property type="term" value="P:response to lipid"/>
    <property type="evidence" value="ECO:0007669"/>
    <property type="project" value="TreeGrafter"/>
</dbReference>
<dbReference type="GO" id="GO:0042594">
    <property type="term" value="P:response to starvation"/>
    <property type="evidence" value="ECO:0007669"/>
    <property type="project" value="TreeGrafter"/>
</dbReference>
<dbReference type="CDD" id="cd00819">
    <property type="entry name" value="PEPCK_GTP"/>
    <property type="match status" value="1"/>
</dbReference>
<dbReference type="FunFam" id="3.40.449.10:FF:000005">
    <property type="entry name" value="Phosphoenolpyruvate carboxykinase [GTP]"/>
    <property type="match status" value="1"/>
</dbReference>
<dbReference type="Gene3D" id="3.90.228.20">
    <property type="match status" value="1"/>
</dbReference>
<dbReference type="Gene3D" id="3.40.449.10">
    <property type="entry name" value="Phosphoenolpyruvate Carboxykinase, domain 1"/>
    <property type="match status" value="1"/>
</dbReference>
<dbReference type="Gene3D" id="2.170.8.10">
    <property type="entry name" value="Phosphoenolpyruvate Carboxykinase, domain 2"/>
    <property type="match status" value="1"/>
</dbReference>
<dbReference type="HAMAP" id="MF_00452">
    <property type="entry name" value="PEPCK_GTP"/>
    <property type="match status" value="1"/>
</dbReference>
<dbReference type="InterPro" id="IPR018091">
    <property type="entry name" value="PEP_carboxykin_GTP_CS"/>
</dbReference>
<dbReference type="InterPro" id="IPR013035">
    <property type="entry name" value="PEP_carboxykinase_C"/>
</dbReference>
<dbReference type="InterPro" id="IPR008209">
    <property type="entry name" value="PEP_carboxykinase_GTP"/>
</dbReference>
<dbReference type="InterPro" id="IPR035077">
    <property type="entry name" value="PEP_carboxykinase_GTP_C"/>
</dbReference>
<dbReference type="InterPro" id="IPR035078">
    <property type="entry name" value="PEP_carboxykinase_GTP_N"/>
</dbReference>
<dbReference type="InterPro" id="IPR008210">
    <property type="entry name" value="PEP_carboxykinase_N"/>
</dbReference>
<dbReference type="NCBIfam" id="NF003253">
    <property type="entry name" value="PRK04210.1"/>
    <property type="match status" value="1"/>
</dbReference>
<dbReference type="PANTHER" id="PTHR11561">
    <property type="entry name" value="PHOSPHOENOLPYRUVATE CARBOXYKINASE"/>
    <property type="match status" value="1"/>
</dbReference>
<dbReference type="PANTHER" id="PTHR11561:SF0">
    <property type="entry name" value="PHOSPHOENOLPYRUVATE CARBOXYKINASE [GTP]-RELATED"/>
    <property type="match status" value="1"/>
</dbReference>
<dbReference type="Pfam" id="PF00821">
    <property type="entry name" value="PEPCK_GTP"/>
    <property type="match status" value="1"/>
</dbReference>
<dbReference type="Pfam" id="PF17297">
    <property type="entry name" value="PEPCK_N"/>
    <property type="match status" value="1"/>
</dbReference>
<dbReference type="PIRSF" id="PIRSF001348">
    <property type="entry name" value="PEP_carboxykinase_GTP"/>
    <property type="match status" value="1"/>
</dbReference>
<dbReference type="SUPFAM" id="SSF68923">
    <property type="entry name" value="PEP carboxykinase N-terminal domain"/>
    <property type="match status" value="1"/>
</dbReference>
<dbReference type="SUPFAM" id="SSF53795">
    <property type="entry name" value="PEP carboxykinase-like"/>
    <property type="match status" value="1"/>
</dbReference>
<dbReference type="PROSITE" id="PS00505">
    <property type="entry name" value="PEPCK_GTP"/>
    <property type="match status" value="1"/>
</dbReference>
<evidence type="ECO:0000255" key="1">
    <source>
        <dbReference type="HAMAP-Rule" id="MF_00452"/>
    </source>
</evidence>
<protein>
    <recommendedName>
        <fullName evidence="1">Phosphoenolpyruvate carboxykinase [GTP]</fullName>
        <shortName evidence="1">PEP carboxykinase</shortName>
        <shortName evidence="1">PEPCK</shortName>
        <ecNumber evidence="1">4.1.1.32</ecNumber>
    </recommendedName>
</protein>
<comment type="function">
    <text evidence="1">Catalyzes the conversion of oxaloacetate (OAA) to phosphoenolpyruvate (PEP), the rate-limiting step in the metabolic pathway that produces glucose from lactate and other precursors derived from the citric acid cycle.</text>
</comment>
<comment type="catalytic activity">
    <reaction evidence="1">
        <text>oxaloacetate + GTP = phosphoenolpyruvate + GDP + CO2</text>
        <dbReference type="Rhea" id="RHEA:10388"/>
        <dbReference type="ChEBI" id="CHEBI:16452"/>
        <dbReference type="ChEBI" id="CHEBI:16526"/>
        <dbReference type="ChEBI" id="CHEBI:37565"/>
        <dbReference type="ChEBI" id="CHEBI:58189"/>
        <dbReference type="ChEBI" id="CHEBI:58702"/>
        <dbReference type="EC" id="4.1.1.32"/>
    </reaction>
</comment>
<comment type="cofactor">
    <cofactor evidence="1">
        <name>Mn(2+)</name>
        <dbReference type="ChEBI" id="CHEBI:29035"/>
    </cofactor>
    <text evidence="1">Binds 1 Mn(2+) ion per subunit.</text>
</comment>
<comment type="pathway">
    <text evidence="1">Carbohydrate biosynthesis; gluconeogenesis.</text>
</comment>
<comment type="subunit">
    <text evidence="1">Monomer.</text>
</comment>
<comment type="subcellular location">
    <subcellularLocation>
        <location evidence="1">Cytoplasm</location>
    </subcellularLocation>
</comment>
<comment type="similarity">
    <text evidence="1">Belongs to the phosphoenolpyruvate carboxykinase [GTP] family.</text>
</comment>
<reference key="1">
    <citation type="submission" date="2006-06" db="EMBL/GenBank/DDBJ databases">
        <title>Complete sequence of chromosome of Mycobacterium sp. MCS.</title>
        <authorList>
            <consortium name="US DOE Joint Genome Institute"/>
            <person name="Copeland A."/>
            <person name="Lucas S."/>
            <person name="Lapidus A."/>
            <person name="Barry K."/>
            <person name="Detter J.C."/>
            <person name="Glavina del Rio T."/>
            <person name="Hammon N."/>
            <person name="Israni S."/>
            <person name="Dalin E."/>
            <person name="Tice H."/>
            <person name="Pitluck S."/>
            <person name="Martinez M."/>
            <person name="Schmutz J."/>
            <person name="Larimer F."/>
            <person name="Land M."/>
            <person name="Hauser L."/>
            <person name="Kyrpides N."/>
            <person name="Kim E."/>
            <person name="Miller C.D."/>
            <person name="Hughes J.E."/>
            <person name="Anderson A.J."/>
            <person name="Sims R.C."/>
            <person name="Richardson P."/>
        </authorList>
    </citation>
    <scope>NUCLEOTIDE SEQUENCE [LARGE SCALE GENOMIC DNA]</scope>
    <source>
        <strain>MCS</strain>
    </source>
</reference>